<comment type="function">
    <text evidence="1">Core subunit of the mitochondrial membrane respiratory chain NADH dehydrogenase (Complex I) which catalyzes electron transfer from NADH through the respiratory chain, using ubiquinone as an electron acceptor. Essential for the catalytic activity and assembly of complex I.</text>
</comment>
<comment type="catalytic activity">
    <reaction evidence="1">
        <text>a ubiquinone + NADH + 5 H(+)(in) = a ubiquinol + NAD(+) + 4 H(+)(out)</text>
        <dbReference type="Rhea" id="RHEA:29091"/>
        <dbReference type="Rhea" id="RHEA-COMP:9565"/>
        <dbReference type="Rhea" id="RHEA-COMP:9566"/>
        <dbReference type="ChEBI" id="CHEBI:15378"/>
        <dbReference type="ChEBI" id="CHEBI:16389"/>
        <dbReference type="ChEBI" id="CHEBI:17976"/>
        <dbReference type="ChEBI" id="CHEBI:57540"/>
        <dbReference type="ChEBI" id="CHEBI:57945"/>
        <dbReference type="EC" id="7.1.1.2"/>
    </reaction>
</comment>
<comment type="subunit">
    <text evidence="2">Core subunit of respiratory chain NADH dehydrogenase (Complex I) which is composed of 45 different subunits.</text>
</comment>
<comment type="subcellular location">
    <subcellularLocation>
        <location evidence="2">Mitochondrion inner membrane</location>
        <topology evidence="3">Multi-pass membrane protein</topology>
    </subcellularLocation>
</comment>
<comment type="similarity">
    <text evidence="4">Belongs to the complex I subunit 1 family.</text>
</comment>
<accession>O78705</accession>
<evidence type="ECO:0000250" key="1">
    <source>
        <dbReference type="UniProtKB" id="P03886"/>
    </source>
</evidence>
<evidence type="ECO:0000250" key="2">
    <source>
        <dbReference type="UniProtKB" id="P03887"/>
    </source>
</evidence>
<evidence type="ECO:0000255" key="3"/>
<evidence type="ECO:0000305" key="4"/>
<protein>
    <recommendedName>
        <fullName>NADH-ubiquinone oxidoreductase chain 1</fullName>
        <ecNumber evidence="1">7.1.1.2</ecNumber>
    </recommendedName>
    <alternativeName>
        <fullName>NADH dehydrogenase subunit 1</fullName>
    </alternativeName>
</protein>
<name>NU1M_OSPRU</name>
<keyword id="KW-0249">Electron transport</keyword>
<keyword id="KW-0472">Membrane</keyword>
<keyword id="KW-0496">Mitochondrion</keyword>
<keyword id="KW-0999">Mitochondrion inner membrane</keyword>
<keyword id="KW-0520">NAD</keyword>
<keyword id="KW-0679">Respiratory chain</keyword>
<keyword id="KW-1278">Translocase</keyword>
<keyword id="KW-0812">Transmembrane</keyword>
<keyword id="KW-1133">Transmembrane helix</keyword>
<keyword id="KW-0813">Transport</keyword>
<keyword id="KW-0830">Ubiquinone</keyword>
<gene>
    <name type="primary">MT-ND1</name>
    <name type="synonym">MTND1</name>
    <name type="synonym">NADH1</name>
    <name type="synonym">ND1</name>
</gene>
<proteinExistence type="inferred from homology"/>
<sequence length="318" mass="35802">MFIINLLLYIVPILLAVAFLTLVERKVLGYMQFRKGPNIVGPYGLLQPIADGIKLFTKEPLRPLTSSVSMFIIAPILALTLALTIWTPLPMPHTLIDLNLGLLFILSLSGLSVYSILWSGWASNSKYALIGALRAVAQTISYEVTLAIILLSIMLINGSFTLKNLLITQENMWLIVSTWPLAMMWYISTLAETNRAPFDLTEGESELVSGFNVEYAAGPFAMFFLAEYANIMAMNAMTAILFLGSSLNHNFSHLSTLSFMLKTLFLTFMFLWIRASYPRFRYDQLMYLLWKNFLPLTLALCLWFISIPIALSCIPPQI</sequence>
<organism>
    <name type="scientific">Osphranter rufus</name>
    <name type="common">Red kangaroo</name>
    <name type="synonym">Macropus rufus</name>
    <dbReference type="NCBI Taxonomy" id="9321"/>
    <lineage>
        <taxon>Eukaryota</taxon>
        <taxon>Metazoa</taxon>
        <taxon>Chordata</taxon>
        <taxon>Craniata</taxon>
        <taxon>Vertebrata</taxon>
        <taxon>Euteleostomi</taxon>
        <taxon>Mammalia</taxon>
        <taxon>Metatheria</taxon>
        <taxon>Diprotodontia</taxon>
        <taxon>Macropodidae</taxon>
        <taxon>Osphranter</taxon>
    </lineage>
</organism>
<reference key="1">
    <citation type="journal article" date="1998" name="J. Mol. Evol.">
        <title>Conflict among individual mitochondrial proteins in resolving the phylogeny of eutherian orders.</title>
        <authorList>
            <person name="Cao Y."/>
            <person name="Janke A."/>
            <person name="Waddell P.J."/>
            <person name="Westerman M."/>
            <person name="Takenaka O."/>
            <person name="Murata S."/>
            <person name="Okada N."/>
            <person name="Paeaebo S."/>
            <person name="Hasegawa M."/>
        </authorList>
    </citation>
    <scope>NUCLEOTIDE SEQUENCE [GENOMIC DNA]</scope>
    <source>
        <tissue>Liver</tissue>
    </source>
</reference>
<feature type="chain" id="PRO_0000117426" description="NADH-ubiquinone oxidoreductase chain 1">
    <location>
        <begin position="1"/>
        <end position="318"/>
    </location>
</feature>
<feature type="transmembrane region" description="Helical" evidence="3">
    <location>
        <begin position="2"/>
        <end position="22"/>
    </location>
</feature>
<feature type="transmembrane region" description="Helical" evidence="3">
    <location>
        <begin position="70"/>
        <end position="90"/>
    </location>
</feature>
<feature type="transmembrane region" description="Helical" evidence="3">
    <location>
        <begin position="100"/>
        <end position="120"/>
    </location>
</feature>
<feature type="transmembrane region" description="Helical" evidence="3">
    <location>
        <begin position="136"/>
        <end position="156"/>
    </location>
</feature>
<feature type="transmembrane region" description="Helical" evidence="3">
    <location>
        <begin position="172"/>
        <end position="192"/>
    </location>
</feature>
<feature type="transmembrane region" description="Helical" evidence="3">
    <location>
        <begin position="223"/>
        <end position="243"/>
    </location>
</feature>
<feature type="transmembrane region" description="Helical" evidence="3">
    <location>
        <begin position="253"/>
        <end position="273"/>
    </location>
</feature>
<feature type="transmembrane region" description="Helical" evidence="3">
    <location>
        <begin position="294"/>
        <end position="314"/>
    </location>
</feature>
<dbReference type="EC" id="7.1.1.2" evidence="1"/>
<dbReference type="EMBL" id="AB011222">
    <property type="protein sequence ID" value="BAA32114.1"/>
    <property type="molecule type" value="Genomic_DNA"/>
</dbReference>
<dbReference type="SMR" id="O78705"/>
<dbReference type="GO" id="GO:0005743">
    <property type="term" value="C:mitochondrial inner membrane"/>
    <property type="evidence" value="ECO:0000250"/>
    <property type="project" value="UniProtKB"/>
</dbReference>
<dbReference type="GO" id="GO:0008137">
    <property type="term" value="F:NADH dehydrogenase (ubiquinone) activity"/>
    <property type="evidence" value="ECO:0000250"/>
    <property type="project" value="UniProtKB"/>
</dbReference>
<dbReference type="GO" id="GO:0006120">
    <property type="term" value="P:mitochondrial electron transport, NADH to ubiquinone"/>
    <property type="evidence" value="ECO:0000250"/>
    <property type="project" value="UniProtKB"/>
</dbReference>
<dbReference type="GO" id="GO:0032981">
    <property type="term" value="P:mitochondrial respiratory chain complex I assembly"/>
    <property type="evidence" value="ECO:0000250"/>
    <property type="project" value="UniProtKB"/>
</dbReference>
<dbReference type="HAMAP" id="MF_01350">
    <property type="entry name" value="NDH1_NuoH"/>
    <property type="match status" value="1"/>
</dbReference>
<dbReference type="InterPro" id="IPR001694">
    <property type="entry name" value="NADH_UbQ_OxRdtase_su1/FPO"/>
</dbReference>
<dbReference type="InterPro" id="IPR018086">
    <property type="entry name" value="NADH_UbQ_OxRdtase_su1_CS"/>
</dbReference>
<dbReference type="PANTHER" id="PTHR11432">
    <property type="entry name" value="NADH DEHYDROGENASE SUBUNIT 1"/>
    <property type="match status" value="1"/>
</dbReference>
<dbReference type="PANTHER" id="PTHR11432:SF3">
    <property type="entry name" value="NADH-UBIQUINONE OXIDOREDUCTASE CHAIN 1"/>
    <property type="match status" value="1"/>
</dbReference>
<dbReference type="Pfam" id="PF00146">
    <property type="entry name" value="NADHdh"/>
    <property type="match status" value="1"/>
</dbReference>
<dbReference type="PROSITE" id="PS00667">
    <property type="entry name" value="COMPLEX1_ND1_1"/>
    <property type="match status" value="1"/>
</dbReference>
<dbReference type="PROSITE" id="PS00668">
    <property type="entry name" value="COMPLEX1_ND1_2"/>
    <property type="match status" value="1"/>
</dbReference>
<geneLocation type="mitochondrion"/>